<reference key="1">
    <citation type="journal article" date="1990" name="Eur. J. Biochem.">
        <title>GAP1, the general amino acid permease gene of Saccharomyces cerevisiae. Nucleotide sequence, protein similarity with the other bakers yeast amino acid permeases, and nitrogen catabolite repression.</title>
        <authorList>
            <person name="Jauniaux J.-C."/>
            <person name="Grenson M."/>
        </authorList>
    </citation>
    <scope>NUCLEOTIDE SEQUENCE [GENOMIC DNA]</scope>
    <scope>INDUCTION</scope>
</reference>
<reference key="2">
    <citation type="journal article" date="1994" name="Nature">
        <title>Complete DNA sequence of yeast chromosome XI.</title>
        <authorList>
            <person name="Dujon B."/>
            <person name="Alexandraki D."/>
            <person name="Andre B."/>
            <person name="Ansorge W."/>
            <person name="Baladron V."/>
            <person name="Ballesta J.P.G."/>
            <person name="Banrevi A."/>
            <person name="Bolle P.-A."/>
            <person name="Bolotin-Fukuhara M."/>
            <person name="Bossier P."/>
            <person name="Bou G."/>
            <person name="Boyer J."/>
            <person name="Buitrago M.J."/>
            <person name="Cheret G."/>
            <person name="Colleaux L."/>
            <person name="Daignan-Fornier B."/>
            <person name="del Rey F."/>
            <person name="Dion C."/>
            <person name="Domdey H."/>
            <person name="Duesterhoeft A."/>
            <person name="Duesterhus S."/>
            <person name="Entian K.-D."/>
            <person name="Erfle H."/>
            <person name="Esteban P.F."/>
            <person name="Feldmann H."/>
            <person name="Fernandes L."/>
            <person name="Fobo G.M."/>
            <person name="Fritz C."/>
            <person name="Fukuhara H."/>
            <person name="Gabel C."/>
            <person name="Gaillon L."/>
            <person name="Garcia-Cantalejo J.M."/>
            <person name="Garcia-Ramirez J.J."/>
            <person name="Gent M.E."/>
            <person name="Ghazvini M."/>
            <person name="Goffeau A."/>
            <person name="Gonzalez A."/>
            <person name="Grothues D."/>
            <person name="Guerreiro P."/>
            <person name="Hegemann J.H."/>
            <person name="Hewitt N."/>
            <person name="Hilger F."/>
            <person name="Hollenberg C.P."/>
            <person name="Horaitis O."/>
            <person name="Indge K.J."/>
            <person name="Jacquier A."/>
            <person name="James C.M."/>
            <person name="Jauniaux J.-C."/>
            <person name="Jimenez A."/>
            <person name="Keuchel H."/>
            <person name="Kirchrath L."/>
            <person name="Kleine K."/>
            <person name="Koetter P."/>
            <person name="Legrain P."/>
            <person name="Liebl S."/>
            <person name="Louis E.J."/>
            <person name="Maia e Silva A."/>
            <person name="Marck C."/>
            <person name="Monnier A.-L."/>
            <person name="Moestl D."/>
            <person name="Mueller S."/>
            <person name="Obermaier B."/>
            <person name="Oliver S.G."/>
            <person name="Pallier C."/>
            <person name="Pascolo S."/>
            <person name="Pfeiffer F."/>
            <person name="Philippsen P."/>
            <person name="Planta R.J."/>
            <person name="Pohl F.M."/>
            <person name="Pohl T.M."/>
            <person name="Poehlmann R."/>
            <person name="Portetelle D."/>
            <person name="Purnelle B."/>
            <person name="Puzos V."/>
            <person name="Ramezani Rad M."/>
            <person name="Rasmussen S.W."/>
            <person name="Remacha M.A."/>
            <person name="Revuelta J.L."/>
            <person name="Richard G.-F."/>
            <person name="Rieger M."/>
            <person name="Rodrigues-Pousada C."/>
            <person name="Rose M."/>
            <person name="Rupp T."/>
            <person name="Santos M.A."/>
            <person name="Schwager C."/>
            <person name="Sensen C."/>
            <person name="Skala J."/>
            <person name="Soares H."/>
            <person name="Sor F."/>
            <person name="Stegemann J."/>
            <person name="Tettelin H."/>
            <person name="Thierry A."/>
            <person name="Tzermia M."/>
            <person name="Urrestarazu L.A."/>
            <person name="van Dyck L."/>
            <person name="van Vliet-Reedijk J.C."/>
            <person name="Valens M."/>
            <person name="Vandenbol M."/>
            <person name="Vilela C."/>
            <person name="Vissers S."/>
            <person name="von Wettstein D."/>
            <person name="Voss H."/>
            <person name="Wiemann S."/>
            <person name="Xu G."/>
            <person name="Zimmermann J."/>
            <person name="Haasemann M."/>
            <person name="Becker I."/>
            <person name="Mewes H.-W."/>
        </authorList>
    </citation>
    <scope>NUCLEOTIDE SEQUENCE [LARGE SCALE GENOMIC DNA]</scope>
    <source>
        <strain>ATCC 204508 / S288c</strain>
    </source>
</reference>
<reference key="3">
    <citation type="journal article" date="2014" name="G3 (Bethesda)">
        <title>The reference genome sequence of Saccharomyces cerevisiae: Then and now.</title>
        <authorList>
            <person name="Engel S.R."/>
            <person name="Dietrich F.S."/>
            <person name="Fisk D.G."/>
            <person name="Binkley G."/>
            <person name="Balakrishnan R."/>
            <person name="Costanzo M.C."/>
            <person name="Dwight S.S."/>
            <person name="Hitz B.C."/>
            <person name="Karra K."/>
            <person name="Nash R.S."/>
            <person name="Weng S."/>
            <person name="Wong E.D."/>
            <person name="Lloyd P."/>
            <person name="Skrzypek M.S."/>
            <person name="Miyasato S.R."/>
            <person name="Simison M."/>
            <person name="Cherry J.M."/>
        </authorList>
    </citation>
    <scope>GENOME REANNOTATION</scope>
    <source>
        <strain>ATCC 204508 / S288c</strain>
    </source>
</reference>
<reference key="4">
    <citation type="journal article" date="2007" name="Genome Res.">
        <title>Approaching a complete repository of sequence-verified protein-encoding clones for Saccharomyces cerevisiae.</title>
        <authorList>
            <person name="Hu Y."/>
            <person name="Rolfs A."/>
            <person name="Bhullar B."/>
            <person name="Murthy T.V.S."/>
            <person name="Zhu C."/>
            <person name="Berger M.F."/>
            <person name="Camargo A.A."/>
            <person name="Kelley F."/>
            <person name="McCarron S."/>
            <person name="Jepson D."/>
            <person name="Richardson A."/>
            <person name="Raphael J."/>
            <person name="Moreira D."/>
            <person name="Taycher E."/>
            <person name="Zuo D."/>
            <person name="Mohr S."/>
            <person name="Kane M.F."/>
            <person name="Williamson J."/>
            <person name="Simpson A.J.G."/>
            <person name="Bulyk M.L."/>
            <person name="Harlow E."/>
            <person name="Marsischky G."/>
            <person name="Kolodner R.D."/>
            <person name="LaBaer J."/>
        </authorList>
    </citation>
    <scope>NUCLEOTIDE SEQUENCE [GENOMIC DNA]</scope>
    <source>
        <strain>ATCC 204508 / S288c</strain>
    </source>
</reference>
<reference key="5">
    <citation type="journal article" date="1970" name="J. Bacteriol.">
        <title>Multiplicity of the amino acid permeases in Saccharomyces cerevisiae. IV. Evidence for a general amino acid permease.</title>
        <authorList>
            <person name="Grenson M."/>
            <person name="Hou C."/>
            <person name="Crabeel M."/>
        </authorList>
    </citation>
    <scope>FUNCTION</scope>
</reference>
<reference key="6">
    <citation type="journal article" date="1995" name="J. Bacteriol.">
        <title>Transcriptional and posttranslational regulation of the general amino acid permease of Saccharomyces cerevisiae.</title>
        <authorList>
            <person name="Stanbrough M."/>
            <person name="Magasanik B."/>
        </authorList>
    </citation>
    <scope>FUNCTION</scope>
    <scope>PHOSPHORYLATION</scope>
</reference>
<reference key="7">
    <citation type="journal article" date="1996" name="J. Bacteriol.">
        <title>Two transcription factors, Gln3p and Nil1p, use the same GATAAG sites to activate the expression of GAP1 of Saccharomyces cerevisiae.</title>
        <authorList>
            <person name="Stanbrough M."/>
            <person name="Magasanik B."/>
        </authorList>
    </citation>
    <scope>INDUCTION</scope>
</reference>
<reference key="8">
    <citation type="journal article" date="1999" name="Curr. Genet.">
        <title>Cysteine uptake by Saccharomyces cerevisiae is accomplished by multiple permeases.</title>
        <authorList>
            <person name="During-Olsen L."/>
            <person name="Regenberg B."/>
            <person name="Gjermansen C."/>
            <person name="Kielland-Brandt M.C."/>
            <person name="Hansen J."/>
        </authorList>
    </citation>
    <scope>FUNCTION IN L-CYSTEINE UPTAKE</scope>
</reference>
<reference key="9">
    <citation type="journal article" date="1999" name="J. Biol. Chem.">
        <title>The fenpropimorph resistance gene FEN2 from Saccharomyces cerevisiae encodes a plasma membrane H+-pantothenate symporter.</title>
        <authorList>
            <person name="Stolz J."/>
            <person name="Sauer N."/>
        </authorList>
    </citation>
    <scope>FUNCTION IN BETA-ALANINE UPTAKE</scope>
</reference>
<reference key="10">
    <citation type="journal article" date="1998" name="Mol. Biol. Cell">
        <title>Nitrogen-regulated ubiquitination of the Gap1 permease of Saccharomyces cerevisiae.</title>
        <authorList>
            <person name="Springael J.Y."/>
            <person name="Andre B."/>
        </authorList>
    </citation>
    <scope>UBIQUITINATION BY RSP5</scope>
</reference>
<reference key="11">
    <citation type="journal article" date="1999" name="J. Cell Sci.">
        <title>NH4+-induced down-regulation of the Saccharomyces cerevisiae Gap1p permease involves its ubiquitination with lysine-63-linked chains.</title>
        <authorList>
            <person name="Springael J.-Y."/>
            <person name="Galan J.-M."/>
            <person name="Haguenauer-Tsapis R."/>
            <person name="Andre B."/>
        </authorList>
    </citation>
    <scope>UBIQUITINATION BY RSP5</scope>
</reference>
<reference key="12">
    <citation type="journal article" date="2000" name="Yeast">
        <title>GAP1, a novel selection and counter-selection marker for multiple gene disruptions in Saccharomyces cerevisiae.</title>
        <authorList>
            <person name="Regenberg B."/>
            <person name="Hansen J."/>
        </authorList>
    </citation>
    <scope>FUNCTION</scope>
</reference>
<reference key="13">
    <citation type="journal article" date="2001" name="J. Biol. Chem.">
        <title>Ubiquitin is required for sorting to the vacuole of the yeast general amino acid permease, Gap1.</title>
        <authorList>
            <person name="Soetens O."/>
            <person name="De Craene J.-O."/>
            <person name="Andre B."/>
        </authorList>
    </citation>
    <scope>SUBCELLULAR LOCATION</scope>
    <scope>UBIQUITINATION BY RSP5</scope>
</reference>
<reference key="14">
    <citation type="journal article" date="2001" name="J. Cell Biol.">
        <title>Components of a ubiquitin ligase complex specify polyubiquitination and intracellular trafficking of the general amino acid permease.</title>
        <authorList>
            <person name="Helliwell S.B."/>
            <person name="Losko S."/>
            <person name="Kaiser C.A."/>
        </authorList>
    </citation>
    <scope>UBIQUITINATION BY RSP5</scope>
    <scope>SUBCELLULAR LOCATION</scope>
</reference>
<reference key="15">
    <citation type="journal article" date="2002" name="J. Cell Biol.">
        <title>Concentrative sorting of secretory cargo proteins into COPII-coated vesicles.</title>
        <authorList>
            <person name="Malkus P."/>
            <person name="Jiang F."/>
            <person name="Schekman R."/>
        </authorList>
    </citation>
    <scope>SUBCELLULAR LOCATION</scope>
</reference>
<reference key="16">
    <citation type="journal article" date="2002" name="Proc. Natl. Acad. Sci. U.S.A.">
        <title>Amino acids regulate the intracellular trafficking of the general amino acid permease of Saccharomycescerevisiae.</title>
        <authorList>
            <person name="Chen E.J."/>
            <person name="Kaiser C.A."/>
        </authorList>
    </citation>
    <scope>SUBCELLULAR LOCATION</scope>
</reference>
<reference key="17">
    <citation type="journal article" date="2003" name="J. Biol. Chem.">
        <title>Permease recycling and ubiquitination status reveal a particular role for Bro1 in the multivesicular body pathway.</title>
        <authorList>
            <person name="Nikko E."/>
            <person name="Marini A.-M."/>
            <person name="Andre B."/>
        </authorList>
    </citation>
    <scope>UBIQUITINATION</scope>
    <scope>SUBCELLULAR LOCATION</scope>
</reference>
<reference key="18">
    <citation type="journal article" date="2003" name="Nat. Biotechnol.">
        <title>A proteomics approach to understanding protein ubiquitination.</title>
        <authorList>
            <person name="Peng J."/>
            <person name="Schwartz D."/>
            <person name="Elias J.E."/>
            <person name="Thoreen C.C."/>
            <person name="Cheng D."/>
            <person name="Marsischky G."/>
            <person name="Roelofs J."/>
            <person name="Finley D."/>
            <person name="Gygi S.P."/>
        </authorList>
    </citation>
    <scope>UBIQUITINATION [LARGE SCALE ANALYSIS] AT LYS-76</scope>
    <scope>IDENTIFICATION BY MASS SPECTROMETRY</scope>
    <source>
        <strain>SUB592</strain>
    </source>
</reference>
<reference key="19">
    <citation type="journal article" date="2003" name="Proc. Natl. Acad. Sci. U.S.A.">
        <title>A subset of membrane-associated proteins is ubiquitinated in response to mutations in the endoplasmic reticulum degradation machinery.</title>
        <authorList>
            <person name="Hitchcock A.L."/>
            <person name="Auld K."/>
            <person name="Gygi S.P."/>
            <person name="Silver P.A."/>
        </authorList>
    </citation>
    <scope>UBIQUITINATION [LARGE SCALE ANALYSIS] AT LYS-76</scope>
    <scope>IDENTIFICATION BY MASS SPECTROMETRY</scope>
</reference>
<reference key="20">
    <citation type="journal article" date="2004" name="Nat. Cell Biol.">
        <title>GGA proteins bind ubiquitin to facilitate sorting at the trans-Golgi network.</title>
        <authorList>
            <person name="Scott P.M."/>
            <person name="Bilodeau P.S."/>
            <person name="Zhdankina O."/>
            <person name="Winistorfer S.C."/>
            <person name="Hauglund M.J."/>
            <person name="Allaman M.M."/>
            <person name="Kearney W.R."/>
            <person name="Robertson A.D."/>
            <person name="Boman A.L."/>
            <person name="Piper R.C."/>
        </authorList>
    </citation>
    <scope>UBIQUITINATION</scope>
    <scope>SUBCELLULAR LOCATION</scope>
</reference>
<reference key="21">
    <citation type="journal article" date="2004" name="Yeast">
        <title>Four permeases import proline and the toxic proline analogue azetidine-2-carboxylate into yeast.</title>
        <authorList>
            <person name="Andreasson C."/>
            <person name="Neve E.P."/>
            <person name="Ljungdahl P.O."/>
        </authorList>
    </citation>
    <scope>FUNCTION</scope>
</reference>
<reference key="22">
    <citation type="journal article" date="2005" name="Biochem. Biophys. Res. Commun.">
        <title>Uptake of putrescine and spermidine by Gap1p on the plasma membrane in Saccharomyces cerevisiae.</title>
        <authorList>
            <person name="Uemura T."/>
            <person name="Kashiwagi K."/>
            <person name="Igarashi K."/>
        </authorList>
    </citation>
    <scope>FUNCTION</scope>
    <scope>SUBCELLULAR LOCATION</scope>
    <scope>INDUCTION</scope>
</reference>
<reference key="23">
    <citation type="journal article" date="2006" name="Proc. Natl. Acad. Sci. U.S.A.">
        <title>A global topology map of the Saccharomyces cerevisiae membrane proteome.</title>
        <authorList>
            <person name="Kim H."/>
            <person name="Melen K."/>
            <person name="Oesterberg M."/>
            <person name="von Heijne G."/>
        </authorList>
    </citation>
    <scope>TOPOLOGY [LARGE SCALE ANALYSIS]</scope>
    <source>
        <strain>ATCC 208353 / W303-1A</strain>
    </source>
</reference>
<reference key="24">
    <citation type="journal article" date="2011" name="Mol. Biol. Cell">
        <title>Transport activity-dependent intracellular sorting of the yeast general amino acid permease.</title>
        <authorList>
            <person name="Cain N.E."/>
            <person name="Kaiser C.A."/>
        </authorList>
    </citation>
    <scope>FUNCTION</scope>
    <scope>SUBCELLULAR LOCATION</scope>
    <scope>MUTAGENESIS OF ALA-297</scope>
</reference>
<reference key="25">
    <citation type="journal article" date="2012" name="PLoS ONE">
        <title>Amino acid transporter genes are essential for FLO11-dependent and FLO11-independent biofilm formation and invasive growth in Saccharomyces cerevisiae.</title>
        <authorList>
            <person name="Torbensen R."/>
            <person name="Moeller H.D."/>
            <person name="Gresham D."/>
            <person name="Alizadeh S."/>
            <person name="Ochmann D."/>
            <person name="Boles E."/>
            <person name="Regenberg B."/>
        </authorList>
    </citation>
    <scope>FUNCTION</scope>
</reference>
<protein>
    <recommendedName>
        <fullName evidence="23">General amino-acid permease GAP1</fullName>
    </recommendedName>
</protein>
<sequence length="602" mass="65656">MSNTSSYEKNNPDNLKHNGITIDSEFLTQEPITIPSNGSAVSIDETGSGSKWQDFKDSFKRVKPIEVDPNLSEAEKVAIITAQTPLKHHLKNRHLQMIAIGGAIGTGLLVGSGTALRTGGPASLLIGWGSTGTMIYAMVMALGELAVIFPISGGFTTYATRFIDESFGYANNFNYMLQWLVVLPLEIVSASITVNFWGTDPKYRDGFVALFWLAIVIINMFGVKGYGEAEFVFSFIKVITVVGFIILGIILNCGGGPTGGYIGGKYWHDPGAFAGDTPGAKFKGVCSVFVTAAFSFAGSELVGLAASESVEPRKSVPKAAKQVFWRITLFYILSLLMIGLLVPYNDKSLIGASSVDAAASPFVIAIKTHGIKGLPSVVNVVILIAVLSVGNSAIYACSRTMVALAEQRFLPEIFSYVDRKGRPLVGIAVTSAFGLIAFVAASKKEGEVFNWLLALSGLSSLFTWGGICICHIRFRKALAAQGRGLDELSFKSPTGVWGSYWGLFMVIIMFIAQFYVAVFPVGDSPSAEGFFEAYLSFPLVMVMYIGHKIYKRNWKLFIPAEKMDIDTGRREVDLDLLKQEIAEEKAIMATKPRWYRIWNFWC</sequence>
<gene>
    <name evidence="23" type="primary">GAP1</name>
    <name type="ordered locus">YKR039W</name>
</gene>
<evidence type="ECO:0000255" key="1"/>
<evidence type="ECO:0000269" key="2">
    <source>
    </source>
</evidence>
<evidence type="ECO:0000269" key="3">
    <source>
    </source>
</evidence>
<evidence type="ECO:0000269" key="4">
    <source>
    </source>
</evidence>
<evidence type="ECO:0000269" key="5">
    <source>
    </source>
</evidence>
<evidence type="ECO:0000269" key="6">
    <source>
    </source>
</evidence>
<evidence type="ECO:0000269" key="7">
    <source>
    </source>
</evidence>
<evidence type="ECO:0000269" key="8">
    <source>
    </source>
</evidence>
<evidence type="ECO:0000269" key="9">
    <source>
    </source>
</evidence>
<evidence type="ECO:0000269" key="10">
    <source>
    </source>
</evidence>
<evidence type="ECO:0000269" key="11">
    <source>
    </source>
</evidence>
<evidence type="ECO:0000269" key="12">
    <source>
    </source>
</evidence>
<evidence type="ECO:0000269" key="13">
    <source>
    </source>
</evidence>
<evidence type="ECO:0000269" key="14">
    <source>
    </source>
</evidence>
<evidence type="ECO:0000269" key="15">
    <source>
    </source>
</evidence>
<evidence type="ECO:0000269" key="16">
    <source>
    </source>
</evidence>
<evidence type="ECO:0000269" key="17">
    <source>
    </source>
</evidence>
<evidence type="ECO:0000269" key="18">
    <source>
    </source>
</evidence>
<evidence type="ECO:0000269" key="19">
    <source>
    </source>
</evidence>
<evidence type="ECO:0000269" key="20">
    <source>
    </source>
</evidence>
<evidence type="ECO:0000269" key="21">
    <source>
    </source>
</evidence>
<evidence type="ECO:0000269" key="22">
    <source>
    </source>
</evidence>
<evidence type="ECO:0000303" key="23">
    <source>
    </source>
</evidence>
<evidence type="ECO:0000305" key="24"/>
<keyword id="KW-0029">Amino-acid transport</keyword>
<keyword id="KW-1003">Cell membrane</keyword>
<keyword id="KW-0256">Endoplasmic reticulum</keyword>
<keyword id="KW-1017">Isopeptide bond</keyword>
<keyword id="KW-0472">Membrane</keyword>
<keyword id="KW-1185">Reference proteome</keyword>
<keyword id="KW-0812">Transmembrane</keyword>
<keyword id="KW-1133">Transmembrane helix</keyword>
<keyword id="KW-0813">Transport</keyword>
<keyword id="KW-0832">Ubl conjugation</keyword>
<name>GAP1_YEAST</name>
<dbReference type="EMBL" id="X52633">
    <property type="protein sequence ID" value="CAA36858.1"/>
    <property type="molecule type" value="Genomic_DNA"/>
</dbReference>
<dbReference type="EMBL" id="Z28264">
    <property type="protein sequence ID" value="CAA82113.1"/>
    <property type="molecule type" value="Genomic_DNA"/>
</dbReference>
<dbReference type="EMBL" id="AY723840">
    <property type="protein sequence ID" value="AAU09757.1"/>
    <property type="molecule type" value="Genomic_DNA"/>
</dbReference>
<dbReference type="EMBL" id="BK006944">
    <property type="protein sequence ID" value="DAA09192.1"/>
    <property type="molecule type" value="Genomic_DNA"/>
</dbReference>
<dbReference type="PIR" id="S38111">
    <property type="entry name" value="S38111"/>
</dbReference>
<dbReference type="RefSeq" id="NP_012965.3">
    <property type="nucleotide sequence ID" value="NM_001179829.3"/>
</dbReference>
<dbReference type="SMR" id="P19145"/>
<dbReference type="BioGRID" id="34171">
    <property type="interactions" value="184"/>
</dbReference>
<dbReference type="DIP" id="DIP-8010N"/>
<dbReference type="FunCoup" id="P19145">
    <property type="interactions" value="312"/>
</dbReference>
<dbReference type="IntAct" id="P19145">
    <property type="interactions" value="5"/>
</dbReference>
<dbReference type="MINT" id="P19145"/>
<dbReference type="STRING" id="4932.YKR039W"/>
<dbReference type="BindingDB" id="P19145"/>
<dbReference type="ChEMBL" id="CHEMBL3308953"/>
<dbReference type="TCDB" id="2.A.3.10.2">
    <property type="family name" value="the amino acid-polyamine-organocation (apc) family"/>
</dbReference>
<dbReference type="GlyGen" id="P19145">
    <property type="glycosylation" value="1 site"/>
</dbReference>
<dbReference type="iPTMnet" id="P19145"/>
<dbReference type="SwissPalm" id="P19145"/>
<dbReference type="PaxDb" id="4932-YKR039W"/>
<dbReference type="PeptideAtlas" id="P19145"/>
<dbReference type="EnsemblFungi" id="YKR039W_mRNA">
    <property type="protein sequence ID" value="YKR039W"/>
    <property type="gene ID" value="YKR039W"/>
</dbReference>
<dbReference type="GeneID" id="853912"/>
<dbReference type="KEGG" id="sce:YKR039W"/>
<dbReference type="AGR" id="SGD:S000001747"/>
<dbReference type="SGD" id="S000001747">
    <property type="gene designation" value="GAP1"/>
</dbReference>
<dbReference type="VEuPathDB" id="FungiDB:YKR039W"/>
<dbReference type="eggNOG" id="KOG1286">
    <property type="taxonomic scope" value="Eukaryota"/>
</dbReference>
<dbReference type="HOGENOM" id="CLU_007946_12_0_1"/>
<dbReference type="InParanoid" id="P19145"/>
<dbReference type="OMA" id="AITVGYW"/>
<dbReference type="OrthoDB" id="3900342at2759"/>
<dbReference type="BioCyc" id="YEAST:G3O-32011-MONOMER"/>
<dbReference type="SABIO-RK" id="P19145"/>
<dbReference type="BioGRID-ORCS" id="853912">
    <property type="hits" value="8 hits in 10 CRISPR screens"/>
</dbReference>
<dbReference type="PRO" id="PR:P19145"/>
<dbReference type="Proteomes" id="UP000002311">
    <property type="component" value="Chromosome XI"/>
</dbReference>
<dbReference type="RNAct" id="P19145">
    <property type="molecule type" value="protein"/>
</dbReference>
<dbReference type="GO" id="GO:0030134">
    <property type="term" value="C:COPII-coated ER to Golgi transport vesicle"/>
    <property type="evidence" value="ECO:0000314"/>
    <property type="project" value="SGD"/>
</dbReference>
<dbReference type="GO" id="GO:0005783">
    <property type="term" value="C:endoplasmic reticulum"/>
    <property type="evidence" value="ECO:0007005"/>
    <property type="project" value="SGD"/>
</dbReference>
<dbReference type="GO" id="GO:0005789">
    <property type="term" value="C:endoplasmic reticulum membrane"/>
    <property type="evidence" value="ECO:0007669"/>
    <property type="project" value="UniProtKB-SubCell"/>
</dbReference>
<dbReference type="GO" id="GO:0005768">
    <property type="term" value="C:endosome"/>
    <property type="evidence" value="ECO:0000314"/>
    <property type="project" value="SGD"/>
</dbReference>
<dbReference type="GO" id="GO:0000328">
    <property type="term" value="C:fungal-type vacuole lumen"/>
    <property type="evidence" value="ECO:0000314"/>
    <property type="project" value="SGD"/>
</dbReference>
<dbReference type="GO" id="GO:0016020">
    <property type="term" value="C:membrane"/>
    <property type="evidence" value="ECO:0000318"/>
    <property type="project" value="GO_Central"/>
</dbReference>
<dbReference type="GO" id="GO:0005771">
    <property type="term" value="C:multivesicular body"/>
    <property type="evidence" value="ECO:0000315"/>
    <property type="project" value="SGD"/>
</dbReference>
<dbReference type="GO" id="GO:0005886">
    <property type="term" value="C:plasma membrane"/>
    <property type="evidence" value="ECO:0000314"/>
    <property type="project" value="SGD"/>
</dbReference>
<dbReference type="GO" id="GO:0015171">
    <property type="term" value="F:amino acid transmembrane transporter activity"/>
    <property type="evidence" value="ECO:0000315"/>
    <property type="project" value="SGD"/>
</dbReference>
<dbReference type="GO" id="GO:0001761">
    <property type="term" value="F:beta-alanine transmembrane transporter activity"/>
    <property type="evidence" value="ECO:0000315"/>
    <property type="project" value="SGD"/>
</dbReference>
<dbReference type="GO" id="GO:0015192">
    <property type="term" value="F:L-phenylalanine transmembrane transporter activity"/>
    <property type="evidence" value="ECO:0000315"/>
    <property type="project" value="CACAO"/>
</dbReference>
<dbReference type="GO" id="GO:0015193">
    <property type="term" value="F:L-proline transmembrane transporter activity"/>
    <property type="evidence" value="ECO:0000316"/>
    <property type="project" value="SGD"/>
</dbReference>
<dbReference type="GO" id="GO:0015203">
    <property type="term" value="F:polyamine transmembrane transporter activity"/>
    <property type="evidence" value="ECO:0000315"/>
    <property type="project" value="SGD"/>
</dbReference>
<dbReference type="GO" id="GO:0003333">
    <property type="term" value="P:amino acid transmembrane transport"/>
    <property type="evidence" value="ECO:0000318"/>
    <property type="project" value="GO_Central"/>
</dbReference>
<dbReference type="GO" id="GO:0006865">
    <property type="term" value="P:amino acid transport"/>
    <property type="evidence" value="ECO:0000315"/>
    <property type="project" value="SGD"/>
</dbReference>
<dbReference type="GO" id="GO:0015846">
    <property type="term" value="P:polyamine transport"/>
    <property type="evidence" value="ECO:0000315"/>
    <property type="project" value="SGD"/>
</dbReference>
<dbReference type="FunFam" id="1.20.1740.10:FF:000017">
    <property type="entry name" value="Amino acid permease"/>
    <property type="match status" value="1"/>
</dbReference>
<dbReference type="Gene3D" id="1.20.1740.10">
    <property type="entry name" value="Amino acid/polyamine transporter I"/>
    <property type="match status" value="1"/>
</dbReference>
<dbReference type="InterPro" id="IPR004841">
    <property type="entry name" value="AA-permease/SLC12A_dom"/>
</dbReference>
<dbReference type="InterPro" id="IPR004840">
    <property type="entry name" value="Amino_acid_permease_CS"/>
</dbReference>
<dbReference type="InterPro" id="IPR004762">
    <property type="entry name" value="Amino_acid_permease_fungi"/>
</dbReference>
<dbReference type="InterPro" id="IPR050524">
    <property type="entry name" value="APC_YAT"/>
</dbReference>
<dbReference type="NCBIfam" id="TIGR00913">
    <property type="entry name" value="2A0310"/>
    <property type="match status" value="1"/>
</dbReference>
<dbReference type="PANTHER" id="PTHR43341">
    <property type="entry name" value="AMINO ACID PERMEASE"/>
    <property type="match status" value="1"/>
</dbReference>
<dbReference type="PANTHER" id="PTHR43341:SF1">
    <property type="entry name" value="GENERAL AMINO-ACID PERMEASE GAP1"/>
    <property type="match status" value="1"/>
</dbReference>
<dbReference type="Pfam" id="PF00324">
    <property type="entry name" value="AA_permease"/>
    <property type="match status" value="1"/>
</dbReference>
<dbReference type="PIRSF" id="PIRSF006060">
    <property type="entry name" value="AA_transporter"/>
    <property type="match status" value="1"/>
</dbReference>
<dbReference type="PROSITE" id="PS00218">
    <property type="entry name" value="AMINO_ACID_PERMEASE_1"/>
    <property type="match status" value="1"/>
</dbReference>
<feature type="chain" id="PRO_0000054151" description="General amino-acid permease GAP1">
    <location>
        <begin position="1"/>
        <end position="602"/>
    </location>
</feature>
<feature type="topological domain" description="Cytoplasmic" evidence="1">
    <location>
        <begin position="1"/>
        <end position="95"/>
    </location>
</feature>
<feature type="transmembrane region" description="Helical" evidence="1">
    <location>
        <begin position="96"/>
        <end position="116"/>
    </location>
</feature>
<feature type="topological domain" description="Extracellular" evidence="1">
    <location>
        <begin position="117"/>
        <end position="121"/>
    </location>
</feature>
<feature type="transmembrane region" description="Helical" evidence="1">
    <location>
        <begin position="122"/>
        <end position="142"/>
    </location>
</feature>
<feature type="topological domain" description="Cytoplasmic" evidence="1">
    <location>
        <begin position="143"/>
        <end position="165"/>
    </location>
</feature>
<feature type="transmembrane region" description="Helical" evidence="1">
    <location>
        <begin position="166"/>
        <end position="185"/>
    </location>
</feature>
<feature type="topological domain" description="Extracellular" evidence="1">
    <location>
        <begin position="186"/>
        <end position="204"/>
    </location>
</feature>
<feature type="transmembrane region" description="Helical" evidence="1">
    <location>
        <begin position="205"/>
        <end position="224"/>
    </location>
</feature>
<feature type="topological domain" description="Cytoplasmic" evidence="1">
    <location>
        <begin position="225"/>
        <end position="237"/>
    </location>
</feature>
<feature type="transmembrane region" description="Helical" evidence="1">
    <location>
        <begin position="238"/>
        <end position="256"/>
    </location>
</feature>
<feature type="topological domain" description="Extracellular" evidence="1">
    <location>
        <begin position="257"/>
        <end position="280"/>
    </location>
</feature>
<feature type="transmembrane region" description="Helical" evidence="1">
    <location>
        <begin position="281"/>
        <end position="298"/>
    </location>
</feature>
<feature type="topological domain" description="Cytoplasmic" evidence="1">
    <location>
        <begin position="299"/>
        <end position="321"/>
    </location>
</feature>
<feature type="transmembrane region" description="Helical" evidence="1">
    <location>
        <begin position="322"/>
        <end position="342"/>
    </location>
</feature>
<feature type="topological domain" description="Extracellular" evidence="1">
    <location>
        <begin position="343"/>
        <end position="376"/>
    </location>
</feature>
<feature type="transmembrane region" description="Helical" evidence="1">
    <location>
        <begin position="377"/>
        <end position="396"/>
    </location>
</feature>
<feature type="topological domain" description="Cytoplasmic" evidence="1">
    <location>
        <begin position="397"/>
        <end position="421"/>
    </location>
</feature>
<feature type="transmembrane region" description="Helical" evidence="1">
    <location>
        <begin position="422"/>
        <end position="442"/>
    </location>
</feature>
<feature type="topological domain" description="Extracellular" evidence="1">
    <location>
        <begin position="443"/>
        <end position="451"/>
    </location>
</feature>
<feature type="transmembrane region" description="Helical" evidence="1">
    <location>
        <begin position="452"/>
        <end position="472"/>
    </location>
</feature>
<feature type="topological domain" description="Cytoplasmic" evidence="1">
    <location>
        <begin position="473"/>
        <end position="491"/>
    </location>
</feature>
<feature type="transmembrane region" description="Helical" evidence="1">
    <location>
        <begin position="492"/>
        <end position="510"/>
    </location>
</feature>
<feature type="topological domain" description="Extracellular" evidence="1">
    <location>
        <begin position="511"/>
        <end position="529"/>
    </location>
</feature>
<feature type="transmembrane region" description="Helical" evidence="1">
    <location>
        <begin position="530"/>
        <end position="548"/>
    </location>
</feature>
<feature type="topological domain" description="Cytoplasmic" evidence="1">
    <location>
        <begin position="549"/>
        <end position="602"/>
    </location>
</feature>
<feature type="cross-link" description="Glycyl lysine isopeptide (Lys-Gly) (interchain with G-Cter in ubiquitin)" evidence="10 12">
    <location>
        <position position="76"/>
    </location>
</feature>
<feature type="mutagenesis site" description="Impairs basic amino-acids transport and regulation by these amino-acids." evidence="16">
    <original>A</original>
    <variation>V</variation>
    <location>
        <position position="297"/>
    </location>
</feature>
<feature type="sequence conflict" description="In Ref. 1; CAA36858." evidence="24" ref="1">
    <location>
        <position position="122"/>
    </location>
</feature>
<feature type="sequence conflict" description="In Ref. 1; CAA36858." evidence="24" ref="1">
    <original>S</original>
    <variation>A</variation>
    <location>
        <position position="189"/>
    </location>
</feature>
<feature type="sequence conflict" description="In Ref. 1; CAA36858." evidence="24" ref="1">
    <original>I</original>
    <variation>V</variation>
    <location>
        <position position="338"/>
    </location>
</feature>
<feature type="sequence conflict" description="In Ref. 1; CAA36858." evidence="24" ref="1">
    <original>V</original>
    <variation>L</variation>
    <location>
        <position position="518"/>
    </location>
</feature>
<proteinExistence type="evidence at protein level"/>
<organism>
    <name type="scientific">Saccharomyces cerevisiae (strain ATCC 204508 / S288c)</name>
    <name type="common">Baker's yeast</name>
    <dbReference type="NCBI Taxonomy" id="559292"/>
    <lineage>
        <taxon>Eukaryota</taxon>
        <taxon>Fungi</taxon>
        <taxon>Dikarya</taxon>
        <taxon>Ascomycota</taxon>
        <taxon>Saccharomycotina</taxon>
        <taxon>Saccharomycetes</taxon>
        <taxon>Saccharomycetales</taxon>
        <taxon>Saccharomycetaceae</taxon>
        <taxon>Saccharomyces</taxon>
    </lineage>
</organism>
<accession>P19145</accession>
<accession>D6VXA2</accession>
<comment type="function">
    <text evidence="3 4 5 13 15 16 18 19">General amino-acid permease involved in the uptake of all the naturally occurring L-amino-acids, related compounds such as ornithine and citrulline, some D-amino acids, toxic amino acid analogs such as azetidine-2-carboxylate, and the polyamines putrescine and spermidine (PubMed:10373490, PubMed:10467005, PubMed:10953083, PubMed:14968425, PubMed:15707981, PubMed:5474888). Senses its transport substrates to set an appropriate level of transporter activity at the cell surface (PubMed:21471002). Required for FLO11 expression and invasive growth (PubMed:22844449).</text>
</comment>
<comment type="subcellular location">
    <subcellularLocation>
        <location evidence="6 7 8 9 11 14 15 16">Cell membrane</location>
        <topology evidence="1">Multi-pass membrane protein</topology>
    </subcellularLocation>
    <subcellularLocation>
        <location evidence="15">Endoplasmic reticulum membrane</location>
        <topology evidence="1">Multi-pass membrane protein</topology>
    </subcellularLocation>
    <text evidence="6 7 8 9 11 14 16">Depending on nitrogen source, GAP1 is transported to the plasma membrane, where it functions for amino acid uptake, or to the vacuole, where it is degraded (PubMed:11352928, PubMed:11500494, PubMed:12417748, PubMed:12499351, PubMed:14523026, PubMed:15039776, PubMed:21471002).</text>
</comment>
<comment type="induction">
    <text evidence="15 17 21">Expression is repressed by ammonia (PubMed:2194797). Expression is induced by polyamines (PubMed:15707981). Both GLN3 and NIL1 bind the 5'-GATAAG-3' motif within the GAP1 promoter to activate transcription (PubMed:8636059).</text>
</comment>
<comment type="PTM">
    <text evidence="20">Active permease is phosphorylated (PubMed:7798155). The addition of glutamine causes rapid dephosphorylation and inactivation of the permease (PubMed:7798155).</text>
</comment>
<comment type="PTM">
    <text evidence="2 6 7 11 14 22">Ubiquitination by RSP5 and the RSP5-associated proteins BUL1 and BUL2, leads the addition of poly-ubiquitin chains being specifically formed by linkage through the lysine 63 residue of ubiquitin and mediates ammonium-induced endocytosis and degradation in the vacuole (PubMed:10194416, PubMed:11352928, PubMed:11500494, PubMed:14523026, PubMed:15039776, PubMed:9614172).</text>
</comment>
<comment type="similarity">
    <text evidence="24">Belongs to the amino acid-polyamine-organocation (APC) superfamily. YAT (TC 2.A.3.10) family.</text>
</comment>